<keyword id="KW-0878">Amphibian defense peptide</keyword>
<keyword id="KW-0044">Antibiotic</keyword>
<keyword id="KW-0929">Antimicrobial</keyword>
<keyword id="KW-0165">Cleavage on pair of basic residues</keyword>
<keyword id="KW-0204">Cytolysis</keyword>
<keyword id="KW-0903">Direct protein sequencing</keyword>
<keyword id="KW-0295">Fungicide</keyword>
<keyword id="KW-0354">Hemolysis</keyword>
<keyword id="KW-0964">Secreted</keyword>
<keyword id="KW-0732">Signal</keyword>
<protein>
    <recommendedName>
        <fullName evidence="3">Temporin-CG1</fullName>
    </recommendedName>
</protein>
<comment type="function">
    <text evidence="2">Antimicrobial peptide active against a variety of Gram-positive and some Gram-negative bacterial strains. Has antifungal activity against a slime mold isolate. Has weak hemolytic activity against human erythrocytes.</text>
</comment>
<comment type="subcellular location">
    <subcellularLocation>
        <location evidence="1 2">Secreted</location>
    </subcellularLocation>
</comment>
<comment type="tissue specificity">
    <text evidence="5">Expressed by the skin glands.</text>
</comment>
<comment type="mass spectrometry"/>
<comment type="similarity">
    <text evidence="4">Belongs to the frog skin active peptide (FSAP) family. Temporin subfamily.</text>
</comment>
<dbReference type="EMBL" id="HQ009833">
    <property type="protein sequence ID" value="ADM34209.1"/>
    <property type="molecule type" value="mRNA"/>
</dbReference>
<dbReference type="EMBL" id="HQ009835">
    <property type="protein sequence ID" value="ADM34211.1"/>
    <property type="molecule type" value="mRNA"/>
</dbReference>
<dbReference type="GO" id="GO:0005576">
    <property type="term" value="C:extracellular region"/>
    <property type="evidence" value="ECO:0007669"/>
    <property type="project" value="UniProtKB-SubCell"/>
</dbReference>
<dbReference type="GO" id="GO:0042742">
    <property type="term" value="P:defense response to bacterium"/>
    <property type="evidence" value="ECO:0007669"/>
    <property type="project" value="UniProtKB-KW"/>
</dbReference>
<dbReference type="GO" id="GO:0050832">
    <property type="term" value="P:defense response to fungus"/>
    <property type="evidence" value="ECO:0007669"/>
    <property type="project" value="UniProtKB-KW"/>
</dbReference>
<dbReference type="GO" id="GO:0031640">
    <property type="term" value="P:killing of cells of another organism"/>
    <property type="evidence" value="ECO:0007669"/>
    <property type="project" value="UniProtKB-KW"/>
</dbReference>
<dbReference type="InterPro" id="IPR004275">
    <property type="entry name" value="Frog_antimicrobial_propeptide"/>
</dbReference>
<dbReference type="Pfam" id="PF03032">
    <property type="entry name" value="FSAP_sig_propep"/>
    <property type="match status" value="1"/>
</dbReference>
<name>TP1_AMOCU</name>
<sequence>MFTLKKSLLLLFFLATINLSLCEQERNAEEERRDDDERNAEVEKRFLPFVGNLLKGLLGK</sequence>
<proteinExistence type="evidence at protein level"/>
<evidence type="ECO:0000255" key="1"/>
<evidence type="ECO:0000269" key="2">
    <source>
    </source>
</evidence>
<evidence type="ECO:0000303" key="3">
    <source>
    </source>
</evidence>
<evidence type="ECO:0000305" key="4"/>
<evidence type="ECO:0000305" key="5">
    <source>
    </source>
</evidence>
<evidence type="ECO:0000312" key="6">
    <source>
        <dbReference type="EMBL" id="ADM34209.1"/>
    </source>
</evidence>
<evidence type="ECO:0000312" key="7">
    <source>
        <dbReference type="EMBL" id="ADM34211.1"/>
    </source>
</evidence>
<accession>E1AWD7</accession>
<organism evidence="3">
    <name type="scientific">Amolops chunganensis</name>
    <name type="common">Chungan torrent frog</name>
    <name type="synonym">Hylorana chunganensis</name>
    <dbReference type="NCBI Taxonomy" id="325556"/>
    <lineage>
        <taxon>Eukaryota</taxon>
        <taxon>Metazoa</taxon>
        <taxon>Chordata</taxon>
        <taxon>Craniata</taxon>
        <taxon>Vertebrata</taxon>
        <taxon>Euteleostomi</taxon>
        <taxon>Amphibia</taxon>
        <taxon>Batrachia</taxon>
        <taxon>Anura</taxon>
        <taxon>Neobatrachia</taxon>
        <taxon>Ranoidea</taxon>
        <taxon>Ranidae</taxon>
        <taxon>Amolops</taxon>
    </lineage>
</organism>
<feature type="signal peptide" evidence="1">
    <location>
        <begin position="1"/>
        <end position="22"/>
    </location>
</feature>
<feature type="propeptide" id="PRO_0000439740" description="Removed in mature form" evidence="5">
    <location>
        <begin position="23"/>
        <end position="43"/>
    </location>
</feature>
<feature type="peptide" id="PRO_0000439741" description="Temporin-CG1" evidence="2">
    <location>
        <begin position="46"/>
        <end position="60"/>
    </location>
</feature>
<reference evidence="6" key="1">
    <citation type="journal article" date="2012" name="Peptides">
        <title>Characterization of diverse antimicrobial peptides in skin secretions of Chungan torrent frog Amolops chunganensis.</title>
        <authorList>
            <person name="Yang X."/>
            <person name="Xia J."/>
            <person name="Yu Z."/>
            <person name="Hu Y."/>
            <person name="Li F."/>
            <person name="Meng H."/>
            <person name="Yang S."/>
            <person name="Liu J."/>
            <person name="Wang H."/>
        </authorList>
    </citation>
    <scope>NUCLEOTIDE SEQUENCE [MRNA]</scope>
    <scope>PROTEIN SEQUENCE OF 46-60</scope>
    <scope>FUNCTION</scope>
    <scope>SYNTHESIS</scope>
    <scope>SUBCELLULAR LOCATION</scope>
    <scope>MASS SPECTROMETRY</scope>
    <source>
        <tissue evidence="3">Skin secretion</tissue>
    </source>
</reference>
<reference evidence="7" key="2">
    <citation type="submission" date="2010-08" db="EMBL/GenBank/DDBJ databases">
        <title>Antimicrobial peptides from amphibian skin of Amolops chunganensis.</title>
        <authorList>
            <person name="Wang H."/>
            <person name="Liu J."/>
        </authorList>
    </citation>
    <scope>NUCLEOTIDE SEQUENCE [MRNA]</scope>
</reference>